<accession>Q5JFM4</accession>
<protein>
    <recommendedName>
        <fullName evidence="1">GMP synthase [glutamine-hydrolyzing] subunit A</fullName>
        <ecNumber evidence="1">6.3.5.2</ecNumber>
    </recommendedName>
    <alternativeName>
        <fullName evidence="1">Glutamine amidotransferase</fullName>
    </alternativeName>
</protein>
<organism>
    <name type="scientific">Thermococcus kodakarensis (strain ATCC BAA-918 / JCM 12380 / KOD1)</name>
    <name type="common">Pyrococcus kodakaraensis (strain KOD1)</name>
    <dbReference type="NCBI Taxonomy" id="69014"/>
    <lineage>
        <taxon>Archaea</taxon>
        <taxon>Methanobacteriati</taxon>
        <taxon>Methanobacteriota</taxon>
        <taxon>Thermococci</taxon>
        <taxon>Thermococcales</taxon>
        <taxon>Thermococcaceae</taxon>
        <taxon>Thermococcus</taxon>
    </lineage>
</organism>
<sequence>MIVIMDNGGQYVHRIWRTLRYLGVEAKIIPNTTPLEEIKAMKPKGIIFSGGPDINKTGNCSAILEHYDEFNVPILGICLGHQLIAKHFGGKVGRGEKAEYSLVEIEILDENDIFRGLPRKLRVWESHMDEVKELPPGFKLLARSETCPVEAMKHESLPIYGVQFHPEVAHTEHGADIYRNFAELCGEL</sequence>
<keyword id="KW-0067">ATP-binding</keyword>
<keyword id="KW-0315">Glutamine amidotransferase</keyword>
<keyword id="KW-0332">GMP biosynthesis</keyword>
<keyword id="KW-0436">Ligase</keyword>
<keyword id="KW-0547">Nucleotide-binding</keyword>
<keyword id="KW-0658">Purine biosynthesis</keyword>
<keyword id="KW-1185">Reference proteome</keyword>
<proteinExistence type="inferred from homology"/>
<feature type="chain" id="PRO_0000140231" description="GMP synthase [glutamine-hydrolyzing] subunit A">
    <location>
        <begin position="1"/>
        <end position="188"/>
    </location>
</feature>
<feature type="domain" description="Glutamine amidotransferase type-1" evidence="1">
    <location>
        <begin position="1"/>
        <end position="188"/>
    </location>
</feature>
<feature type="active site" description="Nucleophile" evidence="1">
    <location>
        <position position="78"/>
    </location>
</feature>
<feature type="active site" evidence="1">
    <location>
        <position position="165"/>
    </location>
</feature>
<feature type="active site" evidence="1">
    <location>
        <position position="167"/>
    </location>
</feature>
<comment type="function">
    <text evidence="1">Catalyzes the synthesis of GMP from XMP.</text>
</comment>
<comment type="catalytic activity">
    <reaction evidence="1">
        <text>XMP + L-glutamine + ATP + H2O = GMP + L-glutamate + AMP + diphosphate + 2 H(+)</text>
        <dbReference type="Rhea" id="RHEA:11680"/>
        <dbReference type="ChEBI" id="CHEBI:15377"/>
        <dbReference type="ChEBI" id="CHEBI:15378"/>
        <dbReference type="ChEBI" id="CHEBI:29985"/>
        <dbReference type="ChEBI" id="CHEBI:30616"/>
        <dbReference type="ChEBI" id="CHEBI:33019"/>
        <dbReference type="ChEBI" id="CHEBI:57464"/>
        <dbReference type="ChEBI" id="CHEBI:58115"/>
        <dbReference type="ChEBI" id="CHEBI:58359"/>
        <dbReference type="ChEBI" id="CHEBI:456215"/>
        <dbReference type="EC" id="6.3.5.2"/>
    </reaction>
</comment>
<comment type="pathway">
    <text evidence="1">Purine metabolism; GMP biosynthesis; GMP from XMP (L-Gln route): step 1/1.</text>
</comment>
<comment type="subunit">
    <text evidence="1">Heterodimer composed of a glutamine amidotransferase subunit (A) and a GMP-binding subunit (B).</text>
</comment>
<evidence type="ECO:0000255" key="1">
    <source>
        <dbReference type="HAMAP-Rule" id="MF_01510"/>
    </source>
</evidence>
<dbReference type="EC" id="6.3.5.2" evidence="1"/>
<dbReference type="EMBL" id="AP006878">
    <property type="protein sequence ID" value="BAD84379.1"/>
    <property type="molecule type" value="Genomic_DNA"/>
</dbReference>
<dbReference type="RefSeq" id="WP_011249145.1">
    <property type="nucleotide sequence ID" value="NC_006624.1"/>
</dbReference>
<dbReference type="SMR" id="Q5JFM4"/>
<dbReference type="FunCoup" id="Q5JFM4">
    <property type="interactions" value="21"/>
</dbReference>
<dbReference type="STRING" id="69014.TK0190"/>
<dbReference type="EnsemblBacteria" id="BAD84379">
    <property type="protein sequence ID" value="BAD84379"/>
    <property type="gene ID" value="TK0190"/>
</dbReference>
<dbReference type="GeneID" id="78446694"/>
<dbReference type="KEGG" id="tko:TK0190"/>
<dbReference type="PATRIC" id="fig|69014.16.peg.189"/>
<dbReference type="eggNOG" id="arCOG00087">
    <property type="taxonomic scope" value="Archaea"/>
</dbReference>
<dbReference type="HOGENOM" id="CLU_014340_1_4_2"/>
<dbReference type="InParanoid" id="Q5JFM4"/>
<dbReference type="OrthoDB" id="10772at2157"/>
<dbReference type="PhylomeDB" id="Q5JFM4"/>
<dbReference type="UniPathway" id="UPA00189">
    <property type="reaction ID" value="UER00296"/>
</dbReference>
<dbReference type="Proteomes" id="UP000000536">
    <property type="component" value="Chromosome"/>
</dbReference>
<dbReference type="GO" id="GO:0005524">
    <property type="term" value="F:ATP binding"/>
    <property type="evidence" value="ECO:0007669"/>
    <property type="project" value="UniProtKB-KW"/>
</dbReference>
<dbReference type="GO" id="GO:0003922">
    <property type="term" value="F:GMP synthase (glutamine-hydrolyzing) activity"/>
    <property type="evidence" value="ECO:0007669"/>
    <property type="project" value="UniProtKB-UniRule"/>
</dbReference>
<dbReference type="CDD" id="cd01742">
    <property type="entry name" value="GATase1_GMP_Synthase"/>
    <property type="match status" value="1"/>
</dbReference>
<dbReference type="FunFam" id="3.40.50.880:FF:000047">
    <property type="entry name" value="GMP synthase [glutamine-hydrolyzing] subunit A"/>
    <property type="match status" value="1"/>
</dbReference>
<dbReference type="Gene3D" id="3.40.50.880">
    <property type="match status" value="1"/>
</dbReference>
<dbReference type="HAMAP" id="MF_01510">
    <property type="entry name" value="GMP_synthase_A"/>
    <property type="match status" value="1"/>
</dbReference>
<dbReference type="InterPro" id="IPR029062">
    <property type="entry name" value="Class_I_gatase-like"/>
</dbReference>
<dbReference type="InterPro" id="IPR017926">
    <property type="entry name" value="GATASE"/>
</dbReference>
<dbReference type="InterPro" id="IPR004739">
    <property type="entry name" value="GMP_synth_GATase"/>
</dbReference>
<dbReference type="InterPro" id="IPR023686">
    <property type="entry name" value="GMP_synthase_A"/>
</dbReference>
<dbReference type="NCBIfam" id="TIGR00888">
    <property type="entry name" value="guaA_Nterm"/>
    <property type="match status" value="1"/>
</dbReference>
<dbReference type="NCBIfam" id="NF001975">
    <property type="entry name" value="PRK00758.1"/>
    <property type="match status" value="1"/>
</dbReference>
<dbReference type="PANTHER" id="PTHR11922:SF2">
    <property type="entry name" value="GMP SYNTHASE [GLUTAMINE-HYDROLYZING]"/>
    <property type="match status" value="1"/>
</dbReference>
<dbReference type="PANTHER" id="PTHR11922">
    <property type="entry name" value="GMP SYNTHASE-RELATED"/>
    <property type="match status" value="1"/>
</dbReference>
<dbReference type="Pfam" id="PF00117">
    <property type="entry name" value="GATase"/>
    <property type="match status" value="1"/>
</dbReference>
<dbReference type="PRINTS" id="PR00097">
    <property type="entry name" value="ANTSNTHASEII"/>
</dbReference>
<dbReference type="PRINTS" id="PR00099">
    <property type="entry name" value="CPSGATASE"/>
</dbReference>
<dbReference type="PRINTS" id="PR00096">
    <property type="entry name" value="GATASE"/>
</dbReference>
<dbReference type="SUPFAM" id="SSF52317">
    <property type="entry name" value="Class I glutamine amidotransferase-like"/>
    <property type="match status" value="1"/>
</dbReference>
<dbReference type="PROSITE" id="PS51273">
    <property type="entry name" value="GATASE_TYPE_1"/>
    <property type="match status" value="1"/>
</dbReference>
<gene>
    <name evidence="1" type="primary">guaAA</name>
    <name type="ordered locus">TK0190</name>
</gene>
<name>GUAAA_THEKO</name>
<reference key="1">
    <citation type="journal article" date="2005" name="Genome Res.">
        <title>Complete genome sequence of the hyperthermophilic archaeon Thermococcus kodakaraensis KOD1 and comparison with Pyrococcus genomes.</title>
        <authorList>
            <person name="Fukui T."/>
            <person name="Atomi H."/>
            <person name="Kanai T."/>
            <person name="Matsumi R."/>
            <person name="Fujiwara S."/>
            <person name="Imanaka T."/>
        </authorList>
    </citation>
    <scope>NUCLEOTIDE SEQUENCE [LARGE SCALE GENOMIC DNA]</scope>
    <source>
        <strain>ATCC BAA-918 / JCM 12380 / KOD1</strain>
    </source>
</reference>